<keyword id="KW-0021">Allosteric enzyme</keyword>
<keyword id="KW-0025">Alternative splicing</keyword>
<keyword id="KW-0035">Amyloplast</keyword>
<keyword id="KW-0067">ATP-binding</keyword>
<keyword id="KW-0150">Chloroplast</keyword>
<keyword id="KW-0547">Nucleotide-binding</keyword>
<keyword id="KW-0548">Nucleotidyltransferase</keyword>
<keyword id="KW-0934">Plastid</keyword>
<keyword id="KW-0750">Starch biosynthesis</keyword>
<keyword id="KW-0808">Transferase</keyword>
<keyword id="KW-0809">Transit peptide</keyword>
<comment type="function">
    <text>This protein plays a role in synthesis of starch. It catalyzes the synthesis of the activated glycosyl donor, ADP-glucose from Glc-1-P and ATP.</text>
</comment>
<comment type="catalytic activity">
    <reaction>
        <text>alpha-D-glucose 1-phosphate + ATP + H(+) = ADP-alpha-D-glucose + diphosphate</text>
        <dbReference type="Rhea" id="RHEA:12120"/>
        <dbReference type="ChEBI" id="CHEBI:15378"/>
        <dbReference type="ChEBI" id="CHEBI:30616"/>
        <dbReference type="ChEBI" id="CHEBI:33019"/>
        <dbReference type="ChEBI" id="CHEBI:57498"/>
        <dbReference type="ChEBI" id="CHEBI:58601"/>
        <dbReference type="EC" id="2.7.7.27"/>
    </reaction>
</comment>
<comment type="activity regulation">
    <text>Activated by 3'phosphoglycerate, inhibited by orthophosphate. Allosteric regulation.</text>
</comment>
<comment type="pathway">
    <text>Glycan biosynthesis; starch biosynthesis.</text>
</comment>
<comment type="subunit">
    <text>Heterotetramer.</text>
</comment>
<comment type="subcellular location">
    <subcellularLocation>
        <location>Plastid</location>
        <location>Chloroplast</location>
    </subcellularLocation>
    <subcellularLocation>
        <location>Plastid</location>
        <location>Amyloplast</location>
    </subcellularLocation>
    <text>Found in the chloroplast in leaf. Found in the plastid in the developing endosperm.</text>
</comment>
<comment type="alternative products">
    <event type="alternative splicing"/>
    <isoform>
        <id>P55238-1</id>
        <name>1</name>
        <sequence type="displayed"/>
    </isoform>
    <isoform>
        <id>P55238-2</id>
        <name>2</name>
        <name>BEPSF1</name>
        <sequence type="described" ref="VSP_001752"/>
    </isoform>
</comment>
<comment type="tissue specificity">
    <text>Leaves and starchy endosperm.</text>
</comment>
<comment type="similarity">
    <text evidence="3">Belongs to the bacterial/plant glucose-1-phosphate adenylyltransferase family.</text>
</comment>
<reference key="1">
    <citation type="journal article" date="1996" name="Biochem. J.">
        <title>A single gene encodes two different transcripts for the ADP-glucose pyrophosphorylase small subunit from barley (Hordeum vulgare).</title>
        <authorList>
            <person name="Thorbjoernsen T."/>
            <person name="Villand P."/>
            <person name="Kleczkowski L.A."/>
            <person name="Olsen O.-A."/>
        </authorList>
    </citation>
    <scope>NUCLEOTIDE SEQUENCE [GENOMIC DNA / MRNA] (ISOFORMS 1 AND 2)</scope>
    <source>
        <strain>cv. Bomi</strain>
        <tissue>Leaf</tissue>
        <tissue>Starchy endosperm</tissue>
    </source>
</reference>
<reference key="2">
    <citation type="journal article" date="1992" name="Plant Mol. Biol.">
        <title>PCR amplification and sequences of cDNA clones for the small and large subunits of ADP-glucose pyrophosphorylase from barley tissues.</title>
        <authorList>
            <person name="Villand P."/>
            <person name="Aalen R."/>
            <person name="Olsen O.-A."/>
            <person name="Luethi E."/>
            <person name="Loenneborg A."/>
            <person name="Kleczkowski L.A."/>
        </authorList>
    </citation>
    <scope>NUCLEOTIDE SEQUENCE [MRNA] OF 285-470</scope>
    <source>
        <strain>cv. Bomi</strain>
        <tissue>Seed</tissue>
    </source>
</reference>
<accession>P55238</accession>
<protein>
    <recommendedName>
        <fullName>Glucose-1-phosphate adenylyltransferase small subunit, chloroplastic/amyloplastic</fullName>
        <ecNumber>2.7.7.27</ecNumber>
    </recommendedName>
    <alternativeName>
        <fullName>ADP-glucose pyrophosphorylase</fullName>
    </alternativeName>
    <alternativeName>
        <fullName>ADP-glucose synthase</fullName>
    </alternativeName>
    <alternativeName>
        <fullName>AGPase B</fullName>
    </alternativeName>
    <alternativeName>
        <fullName>Alpha-D-glucose-1-phosphate adenyl transferase</fullName>
    </alternativeName>
</protein>
<proteinExistence type="evidence at transcript level"/>
<sequence>MAMAAAASPSKILIPPHRASAVTAAASTSCDSLRLLCAPRGRPGPRGLVARPVPRRPFFFSPRAVSDSKSSQTCLDPDASTSVLGIILGGGAGTRLYPLTKKRAKPAVPLGANYRLIDIPVSNCLNSNISKIYVLTQFNSASLNRHLSRAYGSNIGGYKNEGFVEVLAAQQSPDNPDWFQGTADAVRQYLWLFEEHNVMEYLILAGDHLYRMDYEKFIQAHRETDADITVAALPMDEERATAFGLMKIDEEGRIIEFAEKPKGEQLKAMMVDTTILGLEDARAKEMPYIASMGIYVISKHVMLQLLREQFPGANDFGSEVIPGATSTGMRVQAYLYDGYWEDIGTIEAFYNANLGITKKPIPDFSFYDRSAPIYTQPRHLPPSKVLDADVTDSVIGEGCVIKNCKIHHSVVGLRSCISEGAIIEDTLLMGADYYETEADKKLLAEKGGIPIGIGKNSHIKRAIIDKNARIGDNVMIINVDNVQEAARETDGYFIKSGIVTVIKDALLPSGTVI</sequence>
<name>GLGS_HORVU</name>
<feature type="transit peptide" description="Chloroplast" evidence="1">
    <location>
        <begin position="1"/>
        <end position="64"/>
    </location>
</feature>
<feature type="chain" id="PRO_0000011152" description="Glucose-1-phosphate adenylyltransferase small subunit, chloroplastic/amyloplastic">
    <location>
        <begin position="65"/>
        <end position="513"/>
    </location>
</feature>
<feature type="splice variant" id="VSP_001752" description="In isoform 2." evidence="2">
    <original>MAMAAAASPSKILIPPHRASAVTAAASTSCDSLRLLCAPRGRPGPRGLVARPVPRRPFFFSPRAVSDSKSSQTCLDPDAST</original>
    <variation>MDVPLASKVPLPSPSKHEQCNVYSHKSSSKHADLNPHAID</variation>
    <location>
        <begin position="1"/>
        <end position="81"/>
    </location>
</feature>
<feature type="sequence conflict" description="In Ref. 2; X62241." evidence="3" ref="2">
    <original>EM</original>
    <variation>KY</variation>
    <location>
        <begin position="285"/>
        <end position="286"/>
    </location>
</feature>
<feature type="sequence conflict" description="In Ref. 2; X62241." evidence="3" ref="2">
    <original>S</original>
    <variation>G</variation>
    <location>
        <position position="291"/>
    </location>
</feature>
<feature type="sequence conflict" description="In Ref. 2; X62241." evidence="3" ref="2">
    <original>T</original>
    <variation>A</variation>
    <location>
        <position position="426"/>
    </location>
</feature>
<dbReference type="EC" id="2.7.7.27"/>
<dbReference type="EMBL" id="Z48563">
    <property type="protein sequence ID" value="CAA88450.1"/>
    <property type="molecule type" value="mRNA"/>
</dbReference>
<dbReference type="EMBL" id="Z48562">
    <property type="protein sequence ID" value="CAA88449.1"/>
    <property type="molecule type" value="mRNA"/>
</dbReference>
<dbReference type="EMBL" id="Z48578">
    <property type="protein sequence ID" value="CAA88462.1"/>
    <property type="molecule type" value="Genomic_DNA"/>
</dbReference>
<dbReference type="EMBL" id="Z48578">
    <property type="protein sequence ID" value="CAA88461.1"/>
    <property type="molecule type" value="Genomic_DNA"/>
</dbReference>
<dbReference type="EMBL" id="X62241">
    <property type="status" value="NOT_ANNOTATED_CDS"/>
    <property type="molecule type" value="mRNA"/>
</dbReference>
<dbReference type="PIR" id="S22524">
    <property type="entry name" value="S22524"/>
</dbReference>
<dbReference type="PIR" id="S61478">
    <property type="entry name" value="S61478"/>
</dbReference>
<dbReference type="PIR" id="S61479">
    <property type="entry name" value="S61479"/>
</dbReference>
<dbReference type="SMR" id="P55238"/>
<dbReference type="BRENDA" id="2.7.7.27">
    <property type="organism ID" value="2687"/>
</dbReference>
<dbReference type="SABIO-RK" id="P55238"/>
<dbReference type="UniPathway" id="UPA00152"/>
<dbReference type="ExpressionAtlas" id="P55238">
    <property type="expression patterns" value="baseline and differential"/>
</dbReference>
<dbReference type="GO" id="GO:0009501">
    <property type="term" value="C:amyloplast"/>
    <property type="evidence" value="ECO:0007669"/>
    <property type="project" value="UniProtKB-SubCell"/>
</dbReference>
<dbReference type="GO" id="GO:0009507">
    <property type="term" value="C:chloroplast"/>
    <property type="evidence" value="ECO:0007669"/>
    <property type="project" value="UniProtKB-SubCell"/>
</dbReference>
<dbReference type="GO" id="GO:0005524">
    <property type="term" value="F:ATP binding"/>
    <property type="evidence" value="ECO:0007669"/>
    <property type="project" value="UniProtKB-KW"/>
</dbReference>
<dbReference type="GO" id="GO:0008878">
    <property type="term" value="F:glucose-1-phosphate adenylyltransferase activity"/>
    <property type="evidence" value="ECO:0007669"/>
    <property type="project" value="UniProtKB-EC"/>
</dbReference>
<dbReference type="GO" id="GO:0005978">
    <property type="term" value="P:glycogen biosynthetic process"/>
    <property type="evidence" value="ECO:0007669"/>
    <property type="project" value="InterPro"/>
</dbReference>
<dbReference type="GO" id="GO:0019252">
    <property type="term" value="P:starch biosynthetic process"/>
    <property type="evidence" value="ECO:0007669"/>
    <property type="project" value="UniProtKB-UniPathway"/>
</dbReference>
<dbReference type="CDD" id="cd02508">
    <property type="entry name" value="ADP_Glucose_PP"/>
    <property type="match status" value="1"/>
</dbReference>
<dbReference type="CDD" id="cd04651">
    <property type="entry name" value="LbH_G1P_AT_C"/>
    <property type="match status" value="1"/>
</dbReference>
<dbReference type="FunFam" id="2.160.10.10:FF:000010">
    <property type="entry name" value="Glucose-1-phosphate adenylyltransferase"/>
    <property type="match status" value="1"/>
</dbReference>
<dbReference type="FunFam" id="3.90.550.10:FF:000030">
    <property type="entry name" value="Glucose-1-phosphate adenylyltransferase"/>
    <property type="match status" value="1"/>
</dbReference>
<dbReference type="Gene3D" id="2.160.10.10">
    <property type="entry name" value="Hexapeptide repeat proteins"/>
    <property type="match status" value="1"/>
</dbReference>
<dbReference type="Gene3D" id="3.90.550.10">
    <property type="entry name" value="Spore Coat Polysaccharide Biosynthesis Protein SpsA, Chain A"/>
    <property type="match status" value="1"/>
</dbReference>
<dbReference type="InterPro" id="IPR011831">
    <property type="entry name" value="ADP-Glc_PPase"/>
</dbReference>
<dbReference type="InterPro" id="IPR005836">
    <property type="entry name" value="ADP_Glu_pyroP_CS"/>
</dbReference>
<dbReference type="InterPro" id="IPR005835">
    <property type="entry name" value="NTP_transferase_dom"/>
</dbReference>
<dbReference type="InterPro" id="IPR029044">
    <property type="entry name" value="Nucleotide-diphossugar_trans"/>
</dbReference>
<dbReference type="InterPro" id="IPR011004">
    <property type="entry name" value="Trimer_LpxA-like_sf"/>
</dbReference>
<dbReference type="NCBIfam" id="TIGR02091">
    <property type="entry name" value="glgC"/>
    <property type="match status" value="1"/>
</dbReference>
<dbReference type="NCBIfam" id="NF002772">
    <property type="entry name" value="PRK02862.1"/>
    <property type="match status" value="1"/>
</dbReference>
<dbReference type="PANTHER" id="PTHR43523:SF12">
    <property type="entry name" value="GLUCOSE-1-PHOSPHATE ADENYLYLTRANSFERASE LARGE SUBUNIT 1, CHLOROPLASTIC-RELATED"/>
    <property type="match status" value="1"/>
</dbReference>
<dbReference type="PANTHER" id="PTHR43523">
    <property type="entry name" value="GLUCOSE-1-PHOSPHATE ADENYLYLTRANSFERASE-RELATED"/>
    <property type="match status" value="1"/>
</dbReference>
<dbReference type="Pfam" id="PF25247">
    <property type="entry name" value="LbH_GLGC"/>
    <property type="match status" value="1"/>
</dbReference>
<dbReference type="Pfam" id="PF00483">
    <property type="entry name" value="NTP_transferase"/>
    <property type="match status" value="1"/>
</dbReference>
<dbReference type="SUPFAM" id="SSF53448">
    <property type="entry name" value="Nucleotide-diphospho-sugar transferases"/>
    <property type="match status" value="1"/>
</dbReference>
<dbReference type="SUPFAM" id="SSF51161">
    <property type="entry name" value="Trimeric LpxA-like enzymes"/>
    <property type="match status" value="1"/>
</dbReference>
<dbReference type="PROSITE" id="PS00808">
    <property type="entry name" value="ADP_GLC_PYROPHOSPH_1"/>
    <property type="match status" value="1"/>
</dbReference>
<dbReference type="PROSITE" id="PS00809">
    <property type="entry name" value="ADP_GLC_PYROPHOSPH_2"/>
    <property type="match status" value="1"/>
</dbReference>
<dbReference type="PROSITE" id="PS00810">
    <property type="entry name" value="ADP_GLC_PYROPHOSPH_3"/>
    <property type="match status" value="1"/>
</dbReference>
<organism>
    <name type="scientific">Hordeum vulgare</name>
    <name type="common">Barley</name>
    <dbReference type="NCBI Taxonomy" id="4513"/>
    <lineage>
        <taxon>Eukaryota</taxon>
        <taxon>Viridiplantae</taxon>
        <taxon>Streptophyta</taxon>
        <taxon>Embryophyta</taxon>
        <taxon>Tracheophyta</taxon>
        <taxon>Spermatophyta</taxon>
        <taxon>Magnoliopsida</taxon>
        <taxon>Liliopsida</taxon>
        <taxon>Poales</taxon>
        <taxon>Poaceae</taxon>
        <taxon>BOP clade</taxon>
        <taxon>Pooideae</taxon>
        <taxon>Triticodae</taxon>
        <taxon>Triticeae</taxon>
        <taxon>Hordeinae</taxon>
        <taxon>Hordeum</taxon>
    </lineage>
</organism>
<evidence type="ECO:0000255" key="1"/>
<evidence type="ECO:0000303" key="2">
    <source>
    </source>
</evidence>
<evidence type="ECO:0000305" key="3"/>